<organism>
    <name type="scientific">Shewanella frigidimarina (strain NCIMB 400)</name>
    <dbReference type="NCBI Taxonomy" id="318167"/>
    <lineage>
        <taxon>Bacteria</taxon>
        <taxon>Pseudomonadati</taxon>
        <taxon>Pseudomonadota</taxon>
        <taxon>Gammaproteobacteria</taxon>
        <taxon>Alteromonadales</taxon>
        <taxon>Shewanellaceae</taxon>
        <taxon>Shewanella</taxon>
    </lineage>
</organism>
<reference key="1">
    <citation type="submission" date="2006-08" db="EMBL/GenBank/DDBJ databases">
        <title>Complete sequence of Shewanella frigidimarina NCIMB 400.</title>
        <authorList>
            <consortium name="US DOE Joint Genome Institute"/>
            <person name="Copeland A."/>
            <person name="Lucas S."/>
            <person name="Lapidus A."/>
            <person name="Barry K."/>
            <person name="Detter J.C."/>
            <person name="Glavina del Rio T."/>
            <person name="Hammon N."/>
            <person name="Israni S."/>
            <person name="Dalin E."/>
            <person name="Tice H."/>
            <person name="Pitluck S."/>
            <person name="Fredrickson J.K."/>
            <person name="Kolker E."/>
            <person name="McCuel L.A."/>
            <person name="DiChristina T."/>
            <person name="Nealson K.H."/>
            <person name="Newman D."/>
            <person name="Tiedje J.M."/>
            <person name="Zhou J."/>
            <person name="Romine M.F."/>
            <person name="Culley D.E."/>
            <person name="Serres M."/>
            <person name="Chertkov O."/>
            <person name="Brettin T."/>
            <person name="Bruce D."/>
            <person name="Han C."/>
            <person name="Tapia R."/>
            <person name="Gilna P."/>
            <person name="Schmutz J."/>
            <person name="Larimer F."/>
            <person name="Land M."/>
            <person name="Hauser L."/>
            <person name="Kyrpides N."/>
            <person name="Mikhailova N."/>
            <person name="Richardson P."/>
        </authorList>
    </citation>
    <scope>NUCLEOTIDE SEQUENCE [LARGE SCALE GENOMIC DNA]</scope>
    <source>
        <strain>NCIMB 400</strain>
    </source>
</reference>
<feature type="chain" id="PRO_0000319840" description="3-isopropylmalate dehydratase large subunit">
    <location>
        <begin position="1"/>
        <end position="470"/>
    </location>
</feature>
<feature type="binding site" evidence="1">
    <location>
        <position position="351"/>
    </location>
    <ligand>
        <name>[4Fe-4S] cluster</name>
        <dbReference type="ChEBI" id="CHEBI:49883"/>
    </ligand>
</feature>
<feature type="binding site" evidence="1">
    <location>
        <position position="411"/>
    </location>
    <ligand>
        <name>[4Fe-4S] cluster</name>
        <dbReference type="ChEBI" id="CHEBI:49883"/>
    </ligand>
</feature>
<feature type="binding site" evidence="1">
    <location>
        <position position="414"/>
    </location>
    <ligand>
        <name>[4Fe-4S] cluster</name>
        <dbReference type="ChEBI" id="CHEBI:49883"/>
    </ligand>
</feature>
<name>LEUC_SHEFN</name>
<proteinExistence type="inferred from homology"/>
<gene>
    <name evidence="1" type="primary">leuC</name>
    <name type="ordered locus">Sfri_3818</name>
</gene>
<sequence length="470" mass="50381">MAQVTGKTLYEKVWDSHIVASPEGEAPVVYVDRHLVHEVTSPQAFSGLKVAGRKLRAPQKTFATMDHNTSTRSASLDALSPMARTQVETLAQNCKEFGVRLYDIHHPNQGIVHVMGPELGITLPGTVIVCGDSHTATHGAFGALAFGIGTSEVEHVLATQTLRQLKAKNMKVEVRGKVTDGVTAKDIVLAIIGKLGMDGGTGYVVEFCGEAIEALTMEGRMTLCNMAIEMGAKAGMVAPDETTFNYLKGREFAPKDAMWEQAVAAWSELKSDADAVFDVEVVLDANDIAPQLTWGTNPGQVVAIDGVVPNPETETNSTNRTSMIKALEYIGLTPGTKMTDISINKVFIGSCTNSRIEDLRSAAVHAKNRKVAEGVVAIVVPGSGQVKLQAEEEGLDKIFIEAGFEWRLPGCSMCLAMNDDRLDAGDRCASTSNRNFEGRQGRGSRTHLVSPAMAAAAAVAGHFVDIRKPY</sequence>
<keyword id="KW-0004">4Fe-4S</keyword>
<keyword id="KW-0028">Amino-acid biosynthesis</keyword>
<keyword id="KW-0100">Branched-chain amino acid biosynthesis</keyword>
<keyword id="KW-0408">Iron</keyword>
<keyword id="KW-0411">Iron-sulfur</keyword>
<keyword id="KW-0432">Leucine biosynthesis</keyword>
<keyword id="KW-0456">Lyase</keyword>
<keyword id="KW-0479">Metal-binding</keyword>
<keyword id="KW-1185">Reference proteome</keyword>
<comment type="function">
    <text evidence="1">Catalyzes the isomerization between 2-isopropylmalate and 3-isopropylmalate, via the formation of 2-isopropylmaleate.</text>
</comment>
<comment type="catalytic activity">
    <reaction evidence="1">
        <text>(2R,3S)-3-isopropylmalate = (2S)-2-isopropylmalate</text>
        <dbReference type="Rhea" id="RHEA:32287"/>
        <dbReference type="ChEBI" id="CHEBI:1178"/>
        <dbReference type="ChEBI" id="CHEBI:35121"/>
        <dbReference type="EC" id="4.2.1.33"/>
    </reaction>
</comment>
<comment type="cofactor">
    <cofactor evidence="1">
        <name>[4Fe-4S] cluster</name>
        <dbReference type="ChEBI" id="CHEBI:49883"/>
    </cofactor>
    <text evidence="1">Binds 1 [4Fe-4S] cluster per subunit.</text>
</comment>
<comment type="pathway">
    <text evidence="1">Amino-acid biosynthesis; L-leucine biosynthesis; L-leucine from 3-methyl-2-oxobutanoate: step 2/4.</text>
</comment>
<comment type="subunit">
    <text evidence="1">Heterodimer of LeuC and LeuD.</text>
</comment>
<comment type="similarity">
    <text evidence="1">Belongs to the aconitase/IPM isomerase family. LeuC type 1 subfamily.</text>
</comment>
<protein>
    <recommendedName>
        <fullName evidence="1">3-isopropylmalate dehydratase large subunit</fullName>
        <ecNumber evidence="1">4.2.1.33</ecNumber>
    </recommendedName>
    <alternativeName>
        <fullName evidence="1">Alpha-IPM isomerase</fullName>
        <shortName evidence="1">IPMI</shortName>
    </alternativeName>
    <alternativeName>
        <fullName evidence="1">Isopropylmalate isomerase</fullName>
    </alternativeName>
</protein>
<evidence type="ECO:0000255" key="1">
    <source>
        <dbReference type="HAMAP-Rule" id="MF_01026"/>
    </source>
</evidence>
<dbReference type="EC" id="4.2.1.33" evidence="1"/>
<dbReference type="EMBL" id="CP000447">
    <property type="protein sequence ID" value="ABI73643.1"/>
    <property type="molecule type" value="Genomic_DNA"/>
</dbReference>
<dbReference type="RefSeq" id="WP_011639228.1">
    <property type="nucleotide sequence ID" value="NC_008345.1"/>
</dbReference>
<dbReference type="SMR" id="Q07WH1"/>
<dbReference type="STRING" id="318167.Sfri_3818"/>
<dbReference type="KEGG" id="sfr:Sfri_3818"/>
<dbReference type="eggNOG" id="COG0065">
    <property type="taxonomic scope" value="Bacteria"/>
</dbReference>
<dbReference type="HOGENOM" id="CLU_006714_3_4_6"/>
<dbReference type="OrthoDB" id="9802769at2"/>
<dbReference type="UniPathway" id="UPA00048">
    <property type="reaction ID" value="UER00071"/>
</dbReference>
<dbReference type="Proteomes" id="UP000000684">
    <property type="component" value="Chromosome"/>
</dbReference>
<dbReference type="GO" id="GO:0003861">
    <property type="term" value="F:3-isopropylmalate dehydratase activity"/>
    <property type="evidence" value="ECO:0007669"/>
    <property type="project" value="UniProtKB-UniRule"/>
</dbReference>
<dbReference type="GO" id="GO:0051539">
    <property type="term" value="F:4 iron, 4 sulfur cluster binding"/>
    <property type="evidence" value="ECO:0007669"/>
    <property type="project" value="UniProtKB-KW"/>
</dbReference>
<dbReference type="GO" id="GO:0046872">
    <property type="term" value="F:metal ion binding"/>
    <property type="evidence" value="ECO:0007669"/>
    <property type="project" value="UniProtKB-KW"/>
</dbReference>
<dbReference type="GO" id="GO:0009098">
    <property type="term" value="P:L-leucine biosynthetic process"/>
    <property type="evidence" value="ECO:0007669"/>
    <property type="project" value="UniProtKB-UniRule"/>
</dbReference>
<dbReference type="CDD" id="cd01583">
    <property type="entry name" value="IPMI"/>
    <property type="match status" value="1"/>
</dbReference>
<dbReference type="FunFam" id="3.30.499.10:FF:000006">
    <property type="entry name" value="3-isopropylmalate dehydratase large subunit"/>
    <property type="match status" value="1"/>
</dbReference>
<dbReference type="FunFam" id="3.30.499.10:FF:000007">
    <property type="entry name" value="3-isopropylmalate dehydratase large subunit"/>
    <property type="match status" value="1"/>
</dbReference>
<dbReference type="Gene3D" id="3.30.499.10">
    <property type="entry name" value="Aconitase, domain 3"/>
    <property type="match status" value="2"/>
</dbReference>
<dbReference type="HAMAP" id="MF_01026">
    <property type="entry name" value="LeuC_type1"/>
    <property type="match status" value="1"/>
</dbReference>
<dbReference type="InterPro" id="IPR004430">
    <property type="entry name" value="3-IsopropMal_deHydase_lsu"/>
</dbReference>
<dbReference type="InterPro" id="IPR015931">
    <property type="entry name" value="Acnase/IPM_dHydase_lsu_aba_1/3"/>
</dbReference>
<dbReference type="InterPro" id="IPR001030">
    <property type="entry name" value="Acoase/IPM_deHydtase_lsu_aba"/>
</dbReference>
<dbReference type="InterPro" id="IPR018136">
    <property type="entry name" value="Aconitase_4Fe-4S_BS"/>
</dbReference>
<dbReference type="InterPro" id="IPR036008">
    <property type="entry name" value="Aconitase_4Fe-4S_dom"/>
</dbReference>
<dbReference type="InterPro" id="IPR050067">
    <property type="entry name" value="IPM_dehydratase_rel_enz"/>
</dbReference>
<dbReference type="InterPro" id="IPR033941">
    <property type="entry name" value="IPMI_cat"/>
</dbReference>
<dbReference type="NCBIfam" id="TIGR00170">
    <property type="entry name" value="leuC"/>
    <property type="match status" value="1"/>
</dbReference>
<dbReference type="NCBIfam" id="NF004016">
    <property type="entry name" value="PRK05478.1"/>
    <property type="match status" value="1"/>
</dbReference>
<dbReference type="NCBIfam" id="NF009116">
    <property type="entry name" value="PRK12466.1"/>
    <property type="match status" value="1"/>
</dbReference>
<dbReference type="PANTHER" id="PTHR43822:SF9">
    <property type="entry name" value="3-ISOPROPYLMALATE DEHYDRATASE"/>
    <property type="match status" value="1"/>
</dbReference>
<dbReference type="PANTHER" id="PTHR43822">
    <property type="entry name" value="HOMOACONITASE, MITOCHONDRIAL-RELATED"/>
    <property type="match status" value="1"/>
</dbReference>
<dbReference type="Pfam" id="PF00330">
    <property type="entry name" value="Aconitase"/>
    <property type="match status" value="1"/>
</dbReference>
<dbReference type="PRINTS" id="PR00415">
    <property type="entry name" value="ACONITASE"/>
</dbReference>
<dbReference type="SUPFAM" id="SSF53732">
    <property type="entry name" value="Aconitase iron-sulfur domain"/>
    <property type="match status" value="1"/>
</dbReference>
<dbReference type="PROSITE" id="PS00450">
    <property type="entry name" value="ACONITASE_1"/>
    <property type="match status" value="1"/>
</dbReference>
<dbReference type="PROSITE" id="PS01244">
    <property type="entry name" value="ACONITASE_2"/>
    <property type="match status" value="1"/>
</dbReference>
<accession>Q07WH1</accession>